<protein>
    <recommendedName>
        <fullName>Protein MGF 110-4L</fullName>
    </recommendedName>
</protein>
<organismHost>
    <name type="scientific">Ornithodoros</name>
    <name type="common">relapsing fever ticks</name>
    <dbReference type="NCBI Taxonomy" id="6937"/>
</organismHost>
<organismHost>
    <name type="scientific">Phacochoerus aethiopicus</name>
    <name type="common">Warthog</name>
    <dbReference type="NCBI Taxonomy" id="85517"/>
</organismHost>
<organismHost>
    <name type="scientific">Phacochoerus africanus</name>
    <name type="common">Warthog</name>
    <dbReference type="NCBI Taxonomy" id="41426"/>
</organismHost>
<organismHost>
    <name type="scientific">Potamochoerus larvatus</name>
    <name type="common">Bushpig</name>
    <dbReference type="NCBI Taxonomy" id="273792"/>
</organismHost>
<organismHost>
    <name type="scientific">Sus scrofa</name>
    <name type="common">Pig</name>
    <dbReference type="NCBI Taxonomy" id="9823"/>
</organismHost>
<accession>P0C9H3</accession>
<dbReference type="EMBL" id="AY261363">
    <property type="status" value="NOT_ANNOTATED_CDS"/>
    <property type="molecule type" value="Genomic_DNA"/>
</dbReference>
<dbReference type="Proteomes" id="UP000000859">
    <property type="component" value="Segment"/>
</dbReference>
<dbReference type="GO" id="GO:0044172">
    <property type="term" value="C:host cell endoplasmic reticulum-Golgi intermediate compartment"/>
    <property type="evidence" value="ECO:0007669"/>
    <property type="project" value="UniProtKB-SubCell"/>
</dbReference>
<dbReference type="GO" id="GO:0044423">
    <property type="term" value="C:virion component"/>
    <property type="evidence" value="ECO:0007669"/>
    <property type="project" value="UniProtKB-KW"/>
</dbReference>
<dbReference type="InterPro" id="IPR004848">
    <property type="entry name" value="ASFV_fam_110"/>
</dbReference>
<dbReference type="Pfam" id="PF01639">
    <property type="entry name" value="v110"/>
    <property type="match status" value="1"/>
</dbReference>
<sequence>MLVIFLGILGLLANQVLGLPTQAGGHLRSTDNPPQEELGYWCTYMESCKFCWECAHGICKNKVNTSMPLIIENSYLTSCEVSRWYNQCTYSEGNGHYHVMDCSDPVPHNRPHQLLRKIYEKEDL</sequence>
<proteinExistence type="inferred from homology"/>
<feature type="signal peptide" evidence="2">
    <location>
        <begin position="1"/>
        <end position="18"/>
    </location>
</feature>
<feature type="chain" id="PRO_0000373195" description="Protein MGF 110-4L">
    <location>
        <begin position="19"/>
        <end position="124"/>
    </location>
</feature>
<feature type="short sequence motif" description="Prevents secretion from ER" evidence="1">
    <location>
        <begin position="121"/>
        <end position="124"/>
    </location>
</feature>
<feature type="glycosylation site" description="N-linked (GlcNAc...) asparagine; by host" evidence="2">
    <location>
        <position position="64"/>
    </location>
</feature>
<reference key="1">
    <citation type="submission" date="2003-03" db="EMBL/GenBank/DDBJ databases">
        <title>African swine fever virus genomes.</title>
        <authorList>
            <person name="Kutish G.F."/>
            <person name="Rock D.L."/>
        </authorList>
    </citation>
    <scope>NUCLEOTIDE SEQUENCE [LARGE SCALE GENOMIC DNA]</scope>
</reference>
<organism>
    <name type="scientific">African swine fever virus (isolate Tick/South Africa/Pretoriuskop Pr4/1996)</name>
    <name type="common">ASFV</name>
    <dbReference type="NCBI Taxonomy" id="561443"/>
    <lineage>
        <taxon>Viruses</taxon>
        <taxon>Varidnaviria</taxon>
        <taxon>Bamfordvirae</taxon>
        <taxon>Nucleocytoviricota</taxon>
        <taxon>Pokkesviricetes</taxon>
        <taxon>Asfuvirales</taxon>
        <taxon>Asfarviridae</taxon>
        <taxon>Asfivirus</taxon>
        <taxon>African swine fever virus</taxon>
    </lineage>
</organism>
<name>1104L_ASFP4</name>
<comment type="function">
    <text evidence="1">Causes the redistribution of lumenal ER protein to an enlarged ERGIC compartment.</text>
</comment>
<comment type="subcellular location">
    <subcellularLocation>
        <location evidence="1">Virion</location>
    </subcellularLocation>
    <subcellularLocation>
        <location evidence="1">Host endoplasmic reticulum-Golgi intermediate compartment</location>
    </subcellularLocation>
</comment>
<comment type="induction">
    <text evidence="3">Expressed in the early phase of the viral replicative cycle.</text>
</comment>
<comment type="similarity">
    <text evidence="3">Belongs to the asfivirus MGF 110 family.</text>
</comment>
<evidence type="ECO:0000250" key="1">
    <source>
        <dbReference type="UniProtKB" id="P18558"/>
    </source>
</evidence>
<evidence type="ECO:0000255" key="2"/>
<evidence type="ECO:0000305" key="3"/>
<gene>
    <name type="ordered locus">Pret-011</name>
</gene>
<keyword id="KW-0244">Early protein</keyword>
<keyword id="KW-0325">Glycoprotein</keyword>
<keyword id="KW-0732">Signal</keyword>
<keyword id="KW-0946">Virion</keyword>